<protein>
    <recommendedName>
        <fullName>Conotoxin Bt11.4</fullName>
    </recommendedName>
</protein>
<comment type="subcellular location">
    <subcellularLocation>
        <location evidence="1">Secreted</location>
    </subcellularLocation>
</comment>
<comment type="tissue specificity">
    <text>Expressed by the venom duct.</text>
</comment>
<comment type="domain">
    <text>The cysteine framework is XI (C-C-CC-CC-C-C).</text>
</comment>
<comment type="similarity">
    <text evidence="3">Belongs to the conotoxin I1 superfamily.</text>
</comment>
<evidence type="ECO:0000250" key="1"/>
<evidence type="ECO:0000250" key="2">
    <source>
        <dbReference type="UniProtKB" id="Q7Z094"/>
    </source>
</evidence>
<evidence type="ECO:0000305" key="3"/>
<proteinExistence type="evidence at transcript level"/>
<dbReference type="SMR" id="P0C609"/>
<dbReference type="ConoServer" id="2804">
    <property type="toxin name" value="Bt11.4"/>
</dbReference>
<dbReference type="GO" id="GO:0005576">
    <property type="term" value="C:extracellular region"/>
    <property type="evidence" value="ECO:0007669"/>
    <property type="project" value="UniProtKB-SubCell"/>
</dbReference>
<dbReference type="GO" id="GO:0099106">
    <property type="term" value="F:ion channel regulator activity"/>
    <property type="evidence" value="ECO:0007669"/>
    <property type="project" value="UniProtKB-KW"/>
</dbReference>
<dbReference type="GO" id="GO:0090729">
    <property type="term" value="F:toxin activity"/>
    <property type="evidence" value="ECO:0007669"/>
    <property type="project" value="UniProtKB-KW"/>
</dbReference>
<dbReference type="InterPro" id="IPR013141">
    <property type="entry name" value="Conotoxin-I_CS"/>
</dbReference>
<dbReference type="PROSITE" id="PS60019">
    <property type="entry name" value="I_CONOTOXIN"/>
    <property type="match status" value="1"/>
</dbReference>
<keyword id="KW-1015">Disulfide bond</keyword>
<keyword id="KW-0872">Ion channel impairing toxin</keyword>
<keyword id="KW-0528">Neurotoxin</keyword>
<keyword id="KW-0964">Secreted</keyword>
<keyword id="KW-0800">Toxin</keyword>
<accession>P0C609</accession>
<sequence length="36" mass="3966">MCLSLGQRCGRHSNCCGYLCCFYDKCVVTAIGCGHY</sequence>
<name>I1B4_CONBE</name>
<reference key="1">
    <citation type="journal article" date="2008" name="Toxicon">
        <title>I(1)-superfamily conotoxins and prediction of single D-amino acid occurrence.</title>
        <authorList>
            <person name="Buczek O."/>
            <person name="Jimenez E.C."/>
            <person name="Yoshikami D."/>
            <person name="Imperial J.S."/>
            <person name="Watkins M."/>
            <person name="Morrison A."/>
            <person name="Olivera B.M."/>
        </authorList>
    </citation>
    <scope>NUCLEOTIDE SEQUENCE [MRNA]</scope>
    <source>
        <tissue>Venom duct</tissue>
    </source>
</reference>
<feature type="chain" id="PRO_0000314085" description="Conotoxin Bt11.4">
    <location>
        <begin position="1"/>
        <end position="36"/>
    </location>
</feature>
<feature type="disulfide bond" evidence="2">
    <location>
        <begin position="2"/>
        <end position="16"/>
    </location>
</feature>
<feature type="disulfide bond" evidence="2">
    <location>
        <begin position="9"/>
        <end position="21"/>
    </location>
</feature>
<feature type="disulfide bond" evidence="2">
    <location>
        <begin position="15"/>
        <end position="26"/>
    </location>
</feature>
<feature type="disulfide bond" evidence="2">
    <location>
        <begin position="20"/>
        <end position="33"/>
    </location>
</feature>
<organism>
    <name type="scientific">Conus betulinus</name>
    <name type="common">Beech cone</name>
    <dbReference type="NCBI Taxonomy" id="89764"/>
    <lineage>
        <taxon>Eukaryota</taxon>
        <taxon>Metazoa</taxon>
        <taxon>Spiralia</taxon>
        <taxon>Lophotrochozoa</taxon>
        <taxon>Mollusca</taxon>
        <taxon>Gastropoda</taxon>
        <taxon>Caenogastropoda</taxon>
        <taxon>Neogastropoda</taxon>
        <taxon>Conoidea</taxon>
        <taxon>Conidae</taxon>
        <taxon>Conus</taxon>
        <taxon>Dendroconus</taxon>
    </lineage>
</organism>